<evidence type="ECO:0000255" key="1">
    <source>
        <dbReference type="PROSITE-ProRule" id="PRU00037"/>
    </source>
</evidence>
<evidence type="ECO:0000305" key="2"/>
<accession>Q54KH0</accession>
<proteinExistence type="predicted"/>
<gene>
    <name type="ORF">DDB_G0287347</name>
</gene>
<comment type="sequence caution" evidence="2">
    <conflict type="erroneous gene model prediction">
        <sequence resource="EMBL-CDS" id="EAL63741"/>
    </conflict>
</comment>
<organism>
    <name type="scientific">Dictyostelium discoideum</name>
    <name type="common">Social amoeba</name>
    <dbReference type="NCBI Taxonomy" id="44689"/>
    <lineage>
        <taxon>Eukaryota</taxon>
        <taxon>Amoebozoa</taxon>
        <taxon>Evosea</taxon>
        <taxon>Eumycetozoa</taxon>
        <taxon>Dictyostelia</taxon>
        <taxon>Dictyosteliales</taxon>
        <taxon>Dictyosteliaceae</taxon>
        <taxon>Dictyostelium</taxon>
    </lineage>
</organism>
<feature type="chain" id="PRO_0000347029" description="Uncharacterized protein DDB_G0287347">
    <location>
        <begin position="1"/>
        <end position="780"/>
    </location>
</feature>
<feature type="domain" description="BTB" evidence="1">
    <location>
        <begin position="10"/>
        <end position="80"/>
    </location>
</feature>
<reference key="1">
    <citation type="journal article" date="2005" name="Nature">
        <title>The genome of the social amoeba Dictyostelium discoideum.</title>
        <authorList>
            <person name="Eichinger L."/>
            <person name="Pachebat J.A."/>
            <person name="Gloeckner G."/>
            <person name="Rajandream M.A."/>
            <person name="Sucgang R."/>
            <person name="Berriman M."/>
            <person name="Song J."/>
            <person name="Olsen R."/>
            <person name="Szafranski K."/>
            <person name="Xu Q."/>
            <person name="Tunggal B."/>
            <person name="Kummerfeld S."/>
            <person name="Madera M."/>
            <person name="Konfortov B.A."/>
            <person name="Rivero F."/>
            <person name="Bankier A.T."/>
            <person name="Lehmann R."/>
            <person name="Hamlin N."/>
            <person name="Davies R."/>
            <person name="Gaudet P."/>
            <person name="Fey P."/>
            <person name="Pilcher K."/>
            <person name="Chen G."/>
            <person name="Saunders D."/>
            <person name="Sodergren E.J."/>
            <person name="Davis P."/>
            <person name="Kerhornou A."/>
            <person name="Nie X."/>
            <person name="Hall N."/>
            <person name="Anjard C."/>
            <person name="Hemphill L."/>
            <person name="Bason N."/>
            <person name="Farbrother P."/>
            <person name="Desany B."/>
            <person name="Just E."/>
            <person name="Morio T."/>
            <person name="Rost R."/>
            <person name="Churcher C.M."/>
            <person name="Cooper J."/>
            <person name="Haydock S."/>
            <person name="van Driessche N."/>
            <person name="Cronin A."/>
            <person name="Goodhead I."/>
            <person name="Muzny D.M."/>
            <person name="Mourier T."/>
            <person name="Pain A."/>
            <person name="Lu M."/>
            <person name="Harper D."/>
            <person name="Lindsay R."/>
            <person name="Hauser H."/>
            <person name="James K.D."/>
            <person name="Quiles M."/>
            <person name="Madan Babu M."/>
            <person name="Saito T."/>
            <person name="Buchrieser C."/>
            <person name="Wardroper A."/>
            <person name="Felder M."/>
            <person name="Thangavelu M."/>
            <person name="Johnson D."/>
            <person name="Knights A."/>
            <person name="Loulseged H."/>
            <person name="Mungall K.L."/>
            <person name="Oliver K."/>
            <person name="Price C."/>
            <person name="Quail M.A."/>
            <person name="Urushihara H."/>
            <person name="Hernandez J."/>
            <person name="Rabbinowitsch E."/>
            <person name="Steffen D."/>
            <person name="Sanders M."/>
            <person name="Ma J."/>
            <person name="Kohara Y."/>
            <person name="Sharp S."/>
            <person name="Simmonds M.N."/>
            <person name="Spiegler S."/>
            <person name="Tivey A."/>
            <person name="Sugano S."/>
            <person name="White B."/>
            <person name="Walker D."/>
            <person name="Woodward J.R."/>
            <person name="Winckler T."/>
            <person name="Tanaka Y."/>
            <person name="Shaulsky G."/>
            <person name="Schleicher M."/>
            <person name="Weinstock G.M."/>
            <person name="Rosenthal A."/>
            <person name="Cox E.C."/>
            <person name="Chisholm R.L."/>
            <person name="Gibbs R.A."/>
            <person name="Loomis W.F."/>
            <person name="Platzer M."/>
            <person name="Kay R.R."/>
            <person name="Williams J.G."/>
            <person name="Dear P.H."/>
            <person name="Noegel A.A."/>
            <person name="Barrell B.G."/>
            <person name="Kuspa A."/>
        </authorList>
    </citation>
    <scope>NUCLEOTIDE SEQUENCE [LARGE SCALE GENOMIC DNA]</scope>
    <source>
        <strain>AX4</strain>
    </source>
</reference>
<sequence>MLHSVNSNNNNNIIKLNIGGFKYITTRETLILNSSFFNGLLNSDCGTVIDSKGYYFIDRDGELFSPILSFMRTGTFTLPYRMSLNNVYREVDFYGVDRLSALIQHKINISNITSVAGGIYFISKLPLTSNNNNIIINNSNNNNRKILHAVIKANIMALYFNDGYLEIWMQGMSFQWVKILTHLCFSNEYHIKELTARILKNDLNETTSFSLAARTSTERKVLIWFIDLDYHHMKVKIKERDITINHDIDYFHFLISNSFLACISMYGLITIVDLADQINLVSNNNQINQNNQINQNNQNNQNNQNNQNNNFKVIILEDRVSGIANSNESSLFIACSNSKVYELKQNIKRNWEWSIDEIYKLYDPEFFHNTFGFSLTNNNNNITNNNTNINNNNNPNSIYGNENNNNNNNQQNIINEIINKRRIRNNNNCSPLVTCLNSSIITNGGRLKSVLVLGTDDGVVHFLYKSVRDNMDRFYFASTYTLCNEGDDPISKVLISGGEEGVFINAISTSGISKSWHFIFNKQQQRVTGNSVYTGSSTKCIGCISLSSISNSNNLFNNNDNNDDNSFSINDIINNNNNYFNIFKFKNQKDLHFTSNSNNQKENNQYNLDGNFKFSSYNQIKVVIDQSNNLLVFAGSHRNAICALDYELPSTPILIIPLMDKTKVQRILISTFGGCEPTIHDQSFQLLTFHQSNQIYSWSLKEINHYFISTTETILNNDNFLNNINNINNNNNNNNINNNNNTIVKKRSGSSPLISALNNSILNSNNNNNNDNNPINNYDH</sequence>
<dbReference type="EMBL" id="AAFI02000100">
    <property type="protein sequence ID" value="EAL63741.1"/>
    <property type="status" value="ALT_SEQ"/>
    <property type="molecule type" value="Genomic_DNA"/>
</dbReference>
<dbReference type="RefSeq" id="XP_637253.1">
    <property type="nucleotide sequence ID" value="XM_632161.1"/>
</dbReference>
<dbReference type="SMR" id="Q54KH0"/>
<dbReference type="FunCoup" id="Q54KH0">
    <property type="interactions" value="141"/>
</dbReference>
<dbReference type="PaxDb" id="44689-DDB0187435"/>
<dbReference type="EnsemblProtists" id="EAL63741">
    <property type="protein sequence ID" value="EAL63741"/>
    <property type="gene ID" value="DDB_G0287347"/>
</dbReference>
<dbReference type="GeneID" id="8626083"/>
<dbReference type="KEGG" id="ddi:DDB_G0287347"/>
<dbReference type="VEuPathDB" id="AmoebaDB:DDB_G0287347"/>
<dbReference type="VEuPathDB" id="AmoebaDB:DDB_G0287349"/>
<dbReference type="InParanoid" id="Q54KH0"/>
<dbReference type="PRO" id="PR:Q54KH0"/>
<dbReference type="Proteomes" id="UP000002195">
    <property type="component" value="Chromosome 5"/>
</dbReference>
<dbReference type="GO" id="GO:0051260">
    <property type="term" value="P:protein homooligomerization"/>
    <property type="evidence" value="ECO:0007669"/>
    <property type="project" value="InterPro"/>
</dbReference>
<dbReference type="CDD" id="cd18316">
    <property type="entry name" value="BTB_POZ_KCTD-like"/>
    <property type="match status" value="1"/>
</dbReference>
<dbReference type="Gene3D" id="3.30.710.10">
    <property type="entry name" value="Potassium Channel Kv1.1, Chain A"/>
    <property type="match status" value="1"/>
</dbReference>
<dbReference type="InterPro" id="IPR045068">
    <property type="entry name" value="BACURD1-3"/>
</dbReference>
<dbReference type="InterPro" id="IPR000210">
    <property type="entry name" value="BTB/POZ_dom"/>
</dbReference>
<dbReference type="InterPro" id="IPR011333">
    <property type="entry name" value="SKP1/BTB/POZ_sf"/>
</dbReference>
<dbReference type="InterPro" id="IPR003131">
    <property type="entry name" value="T1-type_BTB"/>
</dbReference>
<dbReference type="PANTHER" id="PTHR11145">
    <property type="entry name" value="BTB/POZ DOMAIN-CONTAINING ADAPTER FOR CUL3-MEDIATED RHOA DEGRADATION PROTEIN FAMILY MEMBER"/>
    <property type="match status" value="1"/>
</dbReference>
<dbReference type="PANTHER" id="PTHR11145:SF8">
    <property type="entry name" value="RE57120P"/>
    <property type="match status" value="1"/>
</dbReference>
<dbReference type="Pfam" id="PF02214">
    <property type="entry name" value="BTB_2"/>
    <property type="match status" value="1"/>
</dbReference>
<dbReference type="SMART" id="SM00225">
    <property type="entry name" value="BTB"/>
    <property type="match status" value="1"/>
</dbReference>
<dbReference type="SUPFAM" id="SSF54695">
    <property type="entry name" value="POZ domain"/>
    <property type="match status" value="1"/>
</dbReference>
<dbReference type="PROSITE" id="PS50097">
    <property type="entry name" value="BTB"/>
    <property type="match status" value="1"/>
</dbReference>
<protein>
    <recommendedName>
        <fullName>Uncharacterized protein DDB_G0287347</fullName>
    </recommendedName>
</protein>
<keyword id="KW-1185">Reference proteome</keyword>
<name>Y7435_DICDI</name>